<gene>
    <name type="primary">rluC</name>
    <name type="ordered locus">HI_0412</name>
</gene>
<dbReference type="EC" id="5.4.99.24"/>
<dbReference type="EMBL" id="L42023">
    <property type="protein sequence ID" value="AAC22071.1"/>
    <property type="molecule type" value="Genomic_DNA"/>
</dbReference>
<dbReference type="PIR" id="G64151">
    <property type="entry name" value="G64151"/>
</dbReference>
<dbReference type="RefSeq" id="NP_438574.1">
    <property type="nucleotide sequence ID" value="NC_000907.1"/>
</dbReference>
<dbReference type="SMR" id="P44433"/>
<dbReference type="STRING" id="71421.HI_0412"/>
<dbReference type="EnsemblBacteria" id="AAC22071">
    <property type="protein sequence ID" value="AAC22071"/>
    <property type="gene ID" value="HI_0412"/>
</dbReference>
<dbReference type="KEGG" id="hin:HI_0412"/>
<dbReference type="PATRIC" id="fig|71421.8.peg.431"/>
<dbReference type="eggNOG" id="COG0564">
    <property type="taxonomic scope" value="Bacteria"/>
</dbReference>
<dbReference type="HOGENOM" id="CLU_016902_1_1_6"/>
<dbReference type="OrthoDB" id="9807829at2"/>
<dbReference type="PhylomeDB" id="P44433"/>
<dbReference type="BioCyc" id="HINF71421:G1GJ1-427-MONOMER"/>
<dbReference type="Proteomes" id="UP000000579">
    <property type="component" value="Chromosome"/>
</dbReference>
<dbReference type="GO" id="GO:0160141">
    <property type="term" value="F:23S rRNA pseudouridine(955/2504/2580) synthase activity"/>
    <property type="evidence" value="ECO:0007669"/>
    <property type="project" value="UniProtKB-EC"/>
</dbReference>
<dbReference type="GO" id="GO:0009982">
    <property type="term" value="F:pseudouridine synthase activity"/>
    <property type="evidence" value="ECO:0000318"/>
    <property type="project" value="GO_Central"/>
</dbReference>
<dbReference type="GO" id="GO:0003723">
    <property type="term" value="F:RNA binding"/>
    <property type="evidence" value="ECO:0007669"/>
    <property type="project" value="UniProtKB-KW"/>
</dbReference>
<dbReference type="GO" id="GO:0000455">
    <property type="term" value="P:enzyme-directed rRNA pseudouridine synthesis"/>
    <property type="evidence" value="ECO:0000318"/>
    <property type="project" value="GO_Central"/>
</dbReference>
<dbReference type="CDD" id="cd02869">
    <property type="entry name" value="PseudoU_synth_RluA_like"/>
    <property type="match status" value="1"/>
</dbReference>
<dbReference type="CDD" id="cd00165">
    <property type="entry name" value="S4"/>
    <property type="match status" value="1"/>
</dbReference>
<dbReference type="FunFam" id="3.10.290.10:FF:000010">
    <property type="entry name" value="Pseudouridine synthase"/>
    <property type="match status" value="1"/>
</dbReference>
<dbReference type="Gene3D" id="3.30.2350.10">
    <property type="entry name" value="Pseudouridine synthase"/>
    <property type="match status" value="1"/>
</dbReference>
<dbReference type="Gene3D" id="3.10.290.10">
    <property type="entry name" value="RNA-binding S4 domain"/>
    <property type="match status" value="1"/>
</dbReference>
<dbReference type="InterPro" id="IPR020103">
    <property type="entry name" value="PsdUridine_synth_cat_dom_sf"/>
</dbReference>
<dbReference type="InterPro" id="IPR006224">
    <property type="entry name" value="PsdUridine_synth_RluA-like_CS"/>
</dbReference>
<dbReference type="InterPro" id="IPR006225">
    <property type="entry name" value="PsdUridine_synth_RluC/D"/>
</dbReference>
<dbReference type="InterPro" id="IPR006145">
    <property type="entry name" value="PsdUridine_synth_RsuA/RluA"/>
</dbReference>
<dbReference type="InterPro" id="IPR050188">
    <property type="entry name" value="RluA_PseudoU_synthase"/>
</dbReference>
<dbReference type="InterPro" id="IPR002942">
    <property type="entry name" value="S4_RNA-bd"/>
</dbReference>
<dbReference type="InterPro" id="IPR036986">
    <property type="entry name" value="S4_RNA-bd_sf"/>
</dbReference>
<dbReference type="NCBIfam" id="NF008249">
    <property type="entry name" value="PRK11025.1"/>
    <property type="match status" value="1"/>
</dbReference>
<dbReference type="NCBIfam" id="TIGR00005">
    <property type="entry name" value="rluA_subfam"/>
    <property type="match status" value="1"/>
</dbReference>
<dbReference type="PANTHER" id="PTHR21600">
    <property type="entry name" value="MITOCHONDRIAL RNA PSEUDOURIDINE SYNTHASE"/>
    <property type="match status" value="1"/>
</dbReference>
<dbReference type="PANTHER" id="PTHR21600:SF92">
    <property type="entry name" value="RIBOSOMAL LARGE SUBUNIT PSEUDOURIDINE SYNTHASE C"/>
    <property type="match status" value="1"/>
</dbReference>
<dbReference type="Pfam" id="PF00849">
    <property type="entry name" value="PseudoU_synth_2"/>
    <property type="match status" value="1"/>
</dbReference>
<dbReference type="Pfam" id="PF01479">
    <property type="entry name" value="S4"/>
    <property type="match status" value="1"/>
</dbReference>
<dbReference type="SMART" id="SM00363">
    <property type="entry name" value="S4"/>
    <property type="match status" value="1"/>
</dbReference>
<dbReference type="SUPFAM" id="SSF55174">
    <property type="entry name" value="Alpha-L RNA-binding motif"/>
    <property type="match status" value="1"/>
</dbReference>
<dbReference type="SUPFAM" id="SSF55120">
    <property type="entry name" value="Pseudouridine synthase"/>
    <property type="match status" value="1"/>
</dbReference>
<dbReference type="PROSITE" id="PS01129">
    <property type="entry name" value="PSI_RLU"/>
    <property type="match status" value="1"/>
</dbReference>
<dbReference type="PROSITE" id="PS50889">
    <property type="entry name" value="S4"/>
    <property type="match status" value="1"/>
</dbReference>
<sequence length="322" mass="36588">MTKQNEKIINSSVKMLTISEDESGQRIDNYLLAKLKGVPKSLIYRIVRKGEVRVNKGRIKPEYKLQTGDVVRIPPVRVAEKNDAPISKNLNKVAALENQILFEDDCLIILNKPSGIAVHGGSGLNFGVIEALRALRPEARFLELVHRLDRDTSGILLIAKKRSALRNLHEQLRVKTVQKDYLALVRGQWQSHIKVIQASLLKNELSSGERIVRVSEQGKPSETRFSIEERYINATLVKASPVTGRTHQIRVHTQYAGHPIALDDKYGDKDFDKQMNELGLNRLFLHAFSIRFEHPKNGETLRFNASLDHQMKAILQKLRESK</sequence>
<proteinExistence type="inferred from homology"/>
<evidence type="ECO:0000250" key="1"/>
<evidence type="ECO:0000255" key="2">
    <source>
        <dbReference type="PROSITE-ProRule" id="PRU00182"/>
    </source>
</evidence>
<evidence type="ECO:0000305" key="3"/>
<name>RLUC_HAEIN</name>
<comment type="function">
    <text evidence="1">Responsible for synthesis of pseudouridine from uracil at positions 955, 2504 and 2580 in 23S ribosomal RNA.</text>
</comment>
<comment type="catalytic activity">
    <reaction>
        <text>uridine(955/2504/2580) in 23S rRNA = pseudouridine(955/2504/2580) in 23S rRNA</text>
        <dbReference type="Rhea" id="RHEA:42528"/>
        <dbReference type="Rhea" id="RHEA-COMP:10099"/>
        <dbReference type="Rhea" id="RHEA-COMP:10100"/>
        <dbReference type="ChEBI" id="CHEBI:65314"/>
        <dbReference type="ChEBI" id="CHEBI:65315"/>
        <dbReference type="EC" id="5.4.99.24"/>
    </reaction>
</comment>
<comment type="similarity">
    <text evidence="3">Belongs to the pseudouridine synthase RluA family.</text>
</comment>
<accession>P44433</accession>
<feature type="chain" id="PRO_0000162671" description="Ribosomal large subunit pseudouridine synthase C">
    <location>
        <begin position="1"/>
        <end position="322"/>
    </location>
</feature>
<feature type="domain" description="S4 RNA-binding" evidence="2">
    <location>
        <begin position="25"/>
        <end position="82"/>
    </location>
</feature>
<feature type="active site" evidence="1">
    <location>
        <position position="149"/>
    </location>
</feature>
<protein>
    <recommendedName>
        <fullName>Ribosomal large subunit pseudouridine synthase C</fullName>
        <ecNumber>5.4.99.24</ecNumber>
    </recommendedName>
    <alternativeName>
        <fullName>23S rRNA pseudouridine(955/2504/2580) synthase</fullName>
    </alternativeName>
    <alternativeName>
        <fullName>rRNA pseudouridylate synthase C</fullName>
    </alternativeName>
    <alternativeName>
        <fullName>rRNA-uridine isomerase C</fullName>
    </alternativeName>
</protein>
<keyword id="KW-0413">Isomerase</keyword>
<keyword id="KW-1185">Reference proteome</keyword>
<keyword id="KW-0694">RNA-binding</keyword>
<keyword id="KW-0698">rRNA processing</keyword>
<reference key="1">
    <citation type="journal article" date="1995" name="Science">
        <title>Whole-genome random sequencing and assembly of Haemophilus influenzae Rd.</title>
        <authorList>
            <person name="Fleischmann R.D."/>
            <person name="Adams M.D."/>
            <person name="White O."/>
            <person name="Clayton R.A."/>
            <person name="Kirkness E.F."/>
            <person name="Kerlavage A.R."/>
            <person name="Bult C.J."/>
            <person name="Tomb J.-F."/>
            <person name="Dougherty B.A."/>
            <person name="Merrick J.M."/>
            <person name="McKenney K."/>
            <person name="Sutton G.G."/>
            <person name="FitzHugh W."/>
            <person name="Fields C.A."/>
            <person name="Gocayne J.D."/>
            <person name="Scott J.D."/>
            <person name="Shirley R."/>
            <person name="Liu L.-I."/>
            <person name="Glodek A."/>
            <person name="Kelley J.M."/>
            <person name="Weidman J.F."/>
            <person name="Phillips C.A."/>
            <person name="Spriggs T."/>
            <person name="Hedblom E."/>
            <person name="Cotton M.D."/>
            <person name="Utterback T.R."/>
            <person name="Hanna M.C."/>
            <person name="Nguyen D.T."/>
            <person name="Saudek D.M."/>
            <person name="Brandon R.C."/>
            <person name="Fine L.D."/>
            <person name="Fritchman J.L."/>
            <person name="Fuhrmann J.L."/>
            <person name="Geoghagen N.S.M."/>
            <person name="Gnehm C.L."/>
            <person name="McDonald L.A."/>
            <person name="Small K.V."/>
            <person name="Fraser C.M."/>
            <person name="Smith H.O."/>
            <person name="Venter J.C."/>
        </authorList>
    </citation>
    <scope>NUCLEOTIDE SEQUENCE [LARGE SCALE GENOMIC DNA]</scope>
    <source>
        <strain>ATCC 51907 / DSM 11121 / KW20 / Rd</strain>
    </source>
</reference>
<organism>
    <name type="scientific">Haemophilus influenzae (strain ATCC 51907 / DSM 11121 / KW20 / Rd)</name>
    <dbReference type="NCBI Taxonomy" id="71421"/>
    <lineage>
        <taxon>Bacteria</taxon>
        <taxon>Pseudomonadati</taxon>
        <taxon>Pseudomonadota</taxon>
        <taxon>Gammaproteobacteria</taxon>
        <taxon>Pasteurellales</taxon>
        <taxon>Pasteurellaceae</taxon>
        <taxon>Haemophilus</taxon>
    </lineage>
</organism>